<comment type="function">
    <text evidence="1">One of the primary rRNA binding proteins. Required for association of the 30S and 50S subunits to form the 70S ribosome, for tRNA binding and peptide bond formation. It has been suggested to have peptidyltransferase activity; this is somewhat controversial. Makes several contacts with the 16S rRNA in the 70S ribosome.</text>
</comment>
<comment type="subunit">
    <text evidence="1">Part of the 50S ribosomal subunit. Forms a bridge to the 30S subunit in the 70S ribosome.</text>
</comment>
<comment type="similarity">
    <text evidence="1">Belongs to the universal ribosomal protein uL2 family.</text>
</comment>
<feature type="chain" id="PRO_1000141518" description="Large ribosomal subunit protein uL2">
    <location>
        <begin position="1"/>
        <end position="275"/>
    </location>
</feature>
<feature type="region of interest" description="Disordered" evidence="2">
    <location>
        <begin position="38"/>
        <end position="59"/>
    </location>
</feature>
<feature type="region of interest" description="Disordered" evidence="2">
    <location>
        <begin position="224"/>
        <end position="257"/>
    </location>
</feature>
<feature type="compositionally biased region" description="Polar residues" evidence="2">
    <location>
        <begin position="38"/>
        <end position="53"/>
    </location>
</feature>
<name>RL2_BURM1</name>
<proteinExistence type="inferred from homology"/>
<accession>A9ADJ6</accession>
<keyword id="KW-1185">Reference proteome</keyword>
<keyword id="KW-0687">Ribonucleoprotein</keyword>
<keyword id="KW-0689">Ribosomal protein</keyword>
<keyword id="KW-0694">RNA-binding</keyword>
<keyword id="KW-0699">rRNA-binding</keyword>
<reference key="1">
    <citation type="submission" date="2007-10" db="EMBL/GenBank/DDBJ databases">
        <title>Complete sequence of chromosome 1 of Burkholderia multivorans ATCC 17616.</title>
        <authorList>
            <person name="Copeland A."/>
            <person name="Lucas S."/>
            <person name="Lapidus A."/>
            <person name="Barry K."/>
            <person name="Glavina del Rio T."/>
            <person name="Dalin E."/>
            <person name="Tice H."/>
            <person name="Pitluck S."/>
            <person name="Chain P."/>
            <person name="Malfatti S."/>
            <person name="Shin M."/>
            <person name="Vergez L."/>
            <person name="Schmutz J."/>
            <person name="Larimer F."/>
            <person name="Land M."/>
            <person name="Hauser L."/>
            <person name="Kyrpides N."/>
            <person name="Kim E."/>
            <person name="Tiedje J."/>
            <person name="Richardson P."/>
        </authorList>
    </citation>
    <scope>NUCLEOTIDE SEQUENCE [LARGE SCALE GENOMIC DNA]</scope>
    <source>
        <strain>ATCC 17616 / 249</strain>
    </source>
</reference>
<reference key="2">
    <citation type="submission" date="2007-04" db="EMBL/GenBank/DDBJ databases">
        <title>Complete genome sequence of Burkholderia multivorans ATCC 17616.</title>
        <authorList>
            <person name="Ohtsubo Y."/>
            <person name="Yamashita A."/>
            <person name="Kurokawa K."/>
            <person name="Takami H."/>
            <person name="Yuhara S."/>
            <person name="Nishiyama E."/>
            <person name="Endo R."/>
            <person name="Miyazaki R."/>
            <person name="Ono A."/>
            <person name="Yano K."/>
            <person name="Ito M."/>
            <person name="Sota M."/>
            <person name="Yuji N."/>
            <person name="Hattori M."/>
            <person name="Tsuda M."/>
        </authorList>
    </citation>
    <scope>NUCLEOTIDE SEQUENCE [LARGE SCALE GENOMIC DNA]</scope>
    <source>
        <strain>ATCC 17616 / 249</strain>
    </source>
</reference>
<evidence type="ECO:0000255" key="1">
    <source>
        <dbReference type="HAMAP-Rule" id="MF_01320"/>
    </source>
</evidence>
<evidence type="ECO:0000256" key="2">
    <source>
        <dbReference type="SAM" id="MobiDB-lite"/>
    </source>
</evidence>
<evidence type="ECO:0000305" key="3"/>
<protein>
    <recommendedName>
        <fullName evidence="1">Large ribosomal subunit protein uL2</fullName>
    </recommendedName>
    <alternativeName>
        <fullName evidence="3">50S ribosomal protein L2</fullName>
    </alternativeName>
</protein>
<dbReference type="EMBL" id="CP000868">
    <property type="protein sequence ID" value="ABX13947.1"/>
    <property type="molecule type" value="Genomic_DNA"/>
</dbReference>
<dbReference type="EMBL" id="AP009385">
    <property type="protein sequence ID" value="BAG44887.1"/>
    <property type="molecule type" value="Genomic_DNA"/>
</dbReference>
<dbReference type="RefSeq" id="WP_006400657.1">
    <property type="nucleotide sequence ID" value="NC_010804.1"/>
</dbReference>
<dbReference type="SMR" id="A9ADJ6"/>
<dbReference type="STRING" id="395019.BMULJ_03002"/>
<dbReference type="GeneID" id="89568644"/>
<dbReference type="KEGG" id="bmj:BMULJ_03002"/>
<dbReference type="KEGG" id="bmu:Bmul_0252"/>
<dbReference type="eggNOG" id="COG0090">
    <property type="taxonomic scope" value="Bacteria"/>
</dbReference>
<dbReference type="HOGENOM" id="CLU_036235_2_1_4"/>
<dbReference type="Proteomes" id="UP000008815">
    <property type="component" value="Chromosome 1"/>
</dbReference>
<dbReference type="GO" id="GO:0015934">
    <property type="term" value="C:large ribosomal subunit"/>
    <property type="evidence" value="ECO:0007669"/>
    <property type="project" value="InterPro"/>
</dbReference>
<dbReference type="GO" id="GO:0019843">
    <property type="term" value="F:rRNA binding"/>
    <property type="evidence" value="ECO:0007669"/>
    <property type="project" value="UniProtKB-UniRule"/>
</dbReference>
<dbReference type="GO" id="GO:0003735">
    <property type="term" value="F:structural constituent of ribosome"/>
    <property type="evidence" value="ECO:0007669"/>
    <property type="project" value="InterPro"/>
</dbReference>
<dbReference type="GO" id="GO:0016740">
    <property type="term" value="F:transferase activity"/>
    <property type="evidence" value="ECO:0007669"/>
    <property type="project" value="InterPro"/>
</dbReference>
<dbReference type="GO" id="GO:0002181">
    <property type="term" value="P:cytoplasmic translation"/>
    <property type="evidence" value="ECO:0007669"/>
    <property type="project" value="TreeGrafter"/>
</dbReference>
<dbReference type="FunFam" id="2.30.30.30:FF:000001">
    <property type="entry name" value="50S ribosomal protein L2"/>
    <property type="match status" value="1"/>
</dbReference>
<dbReference type="FunFam" id="2.40.50.140:FF:000003">
    <property type="entry name" value="50S ribosomal protein L2"/>
    <property type="match status" value="1"/>
</dbReference>
<dbReference type="FunFam" id="4.10.950.10:FF:000001">
    <property type="entry name" value="50S ribosomal protein L2"/>
    <property type="match status" value="1"/>
</dbReference>
<dbReference type="Gene3D" id="2.30.30.30">
    <property type="match status" value="1"/>
</dbReference>
<dbReference type="Gene3D" id="2.40.50.140">
    <property type="entry name" value="Nucleic acid-binding proteins"/>
    <property type="match status" value="1"/>
</dbReference>
<dbReference type="Gene3D" id="4.10.950.10">
    <property type="entry name" value="Ribosomal protein L2, domain 3"/>
    <property type="match status" value="1"/>
</dbReference>
<dbReference type="HAMAP" id="MF_01320_B">
    <property type="entry name" value="Ribosomal_uL2_B"/>
    <property type="match status" value="1"/>
</dbReference>
<dbReference type="InterPro" id="IPR012340">
    <property type="entry name" value="NA-bd_OB-fold"/>
</dbReference>
<dbReference type="InterPro" id="IPR014722">
    <property type="entry name" value="Rib_uL2_dom2"/>
</dbReference>
<dbReference type="InterPro" id="IPR002171">
    <property type="entry name" value="Ribosomal_uL2"/>
</dbReference>
<dbReference type="InterPro" id="IPR005880">
    <property type="entry name" value="Ribosomal_uL2_bac/org-type"/>
</dbReference>
<dbReference type="InterPro" id="IPR022669">
    <property type="entry name" value="Ribosomal_uL2_C"/>
</dbReference>
<dbReference type="InterPro" id="IPR022671">
    <property type="entry name" value="Ribosomal_uL2_CS"/>
</dbReference>
<dbReference type="InterPro" id="IPR014726">
    <property type="entry name" value="Ribosomal_uL2_dom3"/>
</dbReference>
<dbReference type="InterPro" id="IPR022666">
    <property type="entry name" value="Ribosomal_uL2_RNA-bd_dom"/>
</dbReference>
<dbReference type="InterPro" id="IPR008991">
    <property type="entry name" value="Translation_prot_SH3-like_sf"/>
</dbReference>
<dbReference type="NCBIfam" id="TIGR01171">
    <property type="entry name" value="rplB_bact"/>
    <property type="match status" value="1"/>
</dbReference>
<dbReference type="PANTHER" id="PTHR13691:SF5">
    <property type="entry name" value="LARGE RIBOSOMAL SUBUNIT PROTEIN UL2M"/>
    <property type="match status" value="1"/>
</dbReference>
<dbReference type="PANTHER" id="PTHR13691">
    <property type="entry name" value="RIBOSOMAL PROTEIN L2"/>
    <property type="match status" value="1"/>
</dbReference>
<dbReference type="Pfam" id="PF00181">
    <property type="entry name" value="Ribosomal_L2"/>
    <property type="match status" value="1"/>
</dbReference>
<dbReference type="Pfam" id="PF03947">
    <property type="entry name" value="Ribosomal_L2_C"/>
    <property type="match status" value="1"/>
</dbReference>
<dbReference type="PIRSF" id="PIRSF002158">
    <property type="entry name" value="Ribosomal_L2"/>
    <property type="match status" value="1"/>
</dbReference>
<dbReference type="SMART" id="SM01383">
    <property type="entry name" value="Ribosomal_L2"/>
    <property type="match status" value="1"/>
</dbReference>
<dbReference type="SMART" id="SM01382">
    <property type="entry name" value="Ribosomal_L2_C"/>
    <property type="match status" value="1"/>
</dbReference>
<dbReference type="SUPFAM" id="SSF50249">
    <property type="entry name" value="Nucleic acid-binding proteins"/>
    <property type="match status" value="1"/>
</dbReference>
<dbReference type="SUPFAM" id="SSF50104">
    <property type="entry name" value="Translation proteins SH3-like domain"/>
    <property type="match status" value="1"/>
</dbReference>
<dbReference type="PROSITE" id="PS00467">
    <property type="entry name" value="RIBOSOMAL_L2"/>
    <property type="match status" value="1"/>
</dbReference>
<organism>
    <name type="scientific">Burkholderia multivorans (strain ATCC 17616 / 249)</name>
    <dbReference type="NCBI Taxonomy" id="395019"/>
    <lineage>
        <taxon>Bacteria</taxon>
        <taxon>Pseudomonadati</taxon>
        <taxon>Pseudomonadota</taxon>
        <taxon>Betaproteobacteria</taxon>
        <taxon>Burkholderiales</taxon>
        <taxon>Burkholderiaceae</taxon>
        <taxon>Burkholderia</taxon>
        <taxon>Burkholderia cepacia complex</taxon>
    </lineage>
</organism>
<gene>
    <name evidence="1" type="primary">rplB</name>
    <name type="ordered locus">Bmul_0252</name>
    <name type="ordered locus">BMULJ_03002</name>
</gene>
<sequence length="275" mass="30253">MAIVKVKPTSPGRRAMVKVVNKDLHKGKPHAALLDTQSSKAGRNNNGRITTRHQGGGHKHHYRVIDFRRTKDGIPAKVERLEYDPNRSANIALVLYADGERRYIIAPKGVTVGQQLMSGSEAPIRAGNTLPIRNIPVGTTIHCIEMLPGKGAQMARSAGTSAMLLAREGVYAQVRLRSGEIRRVHIECRATIGEVGNEEHSLRQIGKAGANRWRGIRPTVRGVAMNPIDHPHGGGEGRTAAGRDPVSPWGTPTKGFRTRRNKRTTTMIVQRRHKR</sequence>